<proteinExistence type="inferred from homology"/>
<dbReference type="EMBL" id="AM920689">
    <property type="protein sequence ID" value="CAP50645.1"/>
    <property type="molecule type" value="Genomic_DNA"/>
</dbReference>
<dbReference type="SMR" id="B0RQB0"/>
<dbReference type="KEGG" id="xca:xcc-b100_1295"/>
<dbReference type="HOGENOM" id="CLU_002794_2_1_6"/>
<dbReference type="Proteomes" id="UP000001188">
    <property type="component" value="Chromosome"/>
</dbReference>
<dbReference type="GO" id="GO:0005829">
    <property type="term" value="C:cytosol"/>
    <property type="evidence" value="ECO:0007669"/>
    <property type="project" value="TreeGrafter"/>
</dbReference>
<dbReference type="GO" id="GO:0005525">
    <property type="term" value="F:GTP binding"/>
    <property type="evidence" value="ECO:0007669"/>
    <property type="project" value="UniProtKB-UniRule"/>
</dbReference>
<dbReference type="GO" id="GO:0003924">
    <property type="term" value="F:GTPase activity"/>
    <property type="evidence" value="ECO:0007669"/>
    <property type="project" value="InterPro"/>
</dbReference>
<dbReference type="GO" id="GO:0097216">
    <property type="term" value="F:guanosine tetraphosphate binding"/>
    <property type="evidence" value="ECO:0007669"/>
    <property type="project" value="UniProtKB-ARBA"/>
</dbReference>
<dbReference type="GO" id="GO:0016150">
    <property type="term" value="F:translation release factor activity, codon nonspecific"/>
    <property type="evidence" value="ECO:0007669"/>
    <property type="project" value="TreeGrafter"/>
</dbReference>
<dbReference type="GO" id="GO:0016149">
    <property type="term" value="F:translation release factor activity, codon specific"/>
    <property type="evidence" value="ECO:0007669"/>
    <property type="project" value="UniProtKB-UniRule"/>
</dbReference>
<dbReference type="GO" id="GO:0006449">
    <property type="term" value="P:regulation of translational termination"/>
    <property type="evidence" value="ECO:0007669"/>
    <property type="project" value="UniProtKB-UniRule"/>
</dbReference>
<dbReference type="CDD" id="cd04169">
    <property type="entry name" value="RF3"/>
    <property type="match status" value="1"/>
</dbReference>
<dbReference type="CDD" id="cd03689">
    <property type="entry name" value="RF3_II"/>
    <property type="match status" value="1"/>
</dbReference>
<dbReference type="CDD" id="cd16259">
    <property type="entry name" value="RF3_III"/>
    <property type="match status" value="1"/>
</dbReference>
<dbReference type="FunFam" id="2.40.30.10:FF:000040">
    <property type="entry name" value="Peptide chain release factor 3"/>
    <property type="match status" value="1"/>
</dbReference>
<dbReference type="FunFam" id="3.30.70.3280:FF:000001">
    <property type="entry name" value="Peptide chain release factor 3"/>
    <property type="match status" value="1"/>
</dbReference>
<dbReference type="FunFam" id="3.40.50.300:FF:000542">
    <property type="entry name" value="Peptide chain release factor 3"/>
    <property type="match status" value="1"/>
</dbReference>
<dbReference type="Gene3D" id="3.40.50.300">
    <property type="entry name" value="P-loop containing nucleotide triphosphate hydrolases"/>
    <property type="match status" value="2"/>
</dbReference>
<dbReference type="Gene3D" id="3.30.70.3280">
    <property type="entry name" value="Peptide chain release factor 3, domain III"/>
    <property type="match status" value="1"/>
</dbReference>
<dbReference type="HAMAP" id="MF_00072">
    <property type="entry name" value="Rel_fac_3"/>
    <property type="match status" value="1"/>
</dbReference>
<dbReference type="InterPro" id="IPR053905">
    <property type="entry name" value="EF-G-like_DII"/>
</dbReference>
<dbReference type="InterPro" id="IPR035647">
    <property type="entry name" value="EFG_III/V"/>
</dbReference>
<dbReference type="InterPro" id="IPR031157">
    <property type="entry name" value="G_TR_CS"/>
</dbReference>
<dbReference type="InterPro" id="IPR027417">
    <property type="entry name" value="P-loop_NTPase"/>
</dbReference>
<dbReference type="InterPro" id="IPR004548">
    <property type="entry name" value="PrfC"/>
</dbReference>
<dbReference type="InterPro" id="IPR032090">
    <property type="entry name" value="RF3_C"/>
</dbReference>
<dbReference type="InterPro" id="IPR038467">
    <property type="entry name" value="RF3_dom_3_sf"/>
</dbReference>
<dbReference type="InterPro" id="IPR041732">
    <property type="entry name" value="RF3_GTP-bd"/>
</dbReference>
<dbReference type="InterPro" id="IPR005225">
    <property type="entry name" value="Small_GTP-bd"/>
</dbReference>
<dbReference type="InterPro" id="IPR000795">
    <property type="entry name" value="T_Tr_GTP-bd_dom"/>
</dbReference>
<dbReference type="InterPro" id="IPR009000">
    <property type="entry name" value="Transl_B-barrel_sf"/>
</dbReference>
<dbReference type="NCBIfam" id="TIGR00503">
    <property type="entry name" value="prfC"/>
    <property type="match status" value="1"/>
</dbReference>
<dbReference type="NCBIfam" id="NF001964">
    <property type="entry name" value="PRK00741.1"/>
    <property type="match status" value="1"/>
</dbReference>
<dbReference type="NCBIfam" id="TIGR00231">
    <property type="entry name" value="small_GTP"/>
    <property type="match status" value="1"/>
</dbReference>
<dbReference type="PANTHER" id="PTHR43556">
    <property type="entry name" value="PEPTIDE CHAIN RELEASE FACTOR RF3"/>
    <property type="match status" value="1"/>
</dbReference>
<dbReference type="PANTHER" id="PTHR43556:SF2">
    <property type="entry name" value="PEPTIDE CHAIN RELEASE FACTOR RF3"/>
    <property type="match status" value="1"/>
</dbReference>
<dbReference type="Pfam" id="PF22042">
    <property type="entry name" value="EF-G_D2"/>
    <property type="match status" value="1"/>
</dbReference>
<dbReference type="Pfam" id="PF00009">
    <property type="entry name" value="GTP_EFTU"/>
    <property type="match status" value="1"/>
</dbReference>
<dbReference type="Pfam" id="PF16658">
    <property type="entry name" value="RF3_C"/>
    <property type="match status" value="1"/>
</dbReference>
<dbReference type="PRINTS" id="PR00315">
    <property type="entry name" value="ELONGATNFCT"/>
</dbReference>
<dbReference type="SUPFAM" id="SSF54980">
    <property type="entry name" value="EF-G C-terminal domain-like"/>
    <property type="match status" value="1"/>
</dbReference>
<dbReference type="SUPFAM" id="SSF52540">
    <property type="entry name" value="P-loop containing nucleoside triphosphate hydrolases"/>
    <property type="match status" value="1"/>
</dbReference>
<dbReference type="SUPFAM" id="SSF50447">
    <property type="entry name" value="Translation proteins"/>
    <property type="match status" value="1"/>
</dbReference>
<dbReference type="PROSITE" id="PS00301">
    <property type="entry name" value="G_TR_1"/>
    <property type="match status" value="1"/>
</dbReference>
<dbReference type="PROSITE" id="PS51722">
    <property type="entry name" value="G_TR_2"/>
    <property type="match status" value="1"/>
</dbReference>
<reference key="1">
    <citation type="journal article" date="2008" name="J. Biotechnol.">
        <title>The genome of Xanthomonas campestris pv. campestris B100 and its use for the reconstruction of metabolic pathways involved in xanthan biosynthesis.</title>
        <authorList>
            <person name="Vorhoelter F.-J."/>
            <person name="Schneiker S."/>
            <person name="Goesmann A."/>
            <person name="Krause L."/>
            <person name="Bekel T."/>
            <person name="Kaiser O."/>
            <person name="Linke B."/>
            <person name="Patschkowski T."/>
            <person name="Rueckert C."/>
            <person name="Schmid J."/>
            <person name="Sidhu V.K."/>
            <person name="Sieber V."/>
            <person name="Tauch A."/>
            <person name="Watt S.A."/>
            <person name="Weisshaar B."/>
            <person name="Becker A."/>
            <person name="Niehaus K."/>
            <person name="Puehler A."/>
        </authorList>
    </citation>
    <scope>NUCLEOTIDE SEQUENCE [LARGE SCALE GENOMIC DNA]</scope>
    <source>
        <strain>B100</strain>
    </source>
</reference>
<feature type="chain" id="PRO_1000092510" description="Peptide chain release factor 3">
    <location>
        <begin position="1"/>
        <end position="534"/>
    </location>
</feature>
<feature type="domain" description="tr-type G">
    <location>
        <begin position="9"/>
        <end position="278"/>
    </location>
</feature>
<feature type="binding site" evidence="1">
    <location>
        <begin position="18"/>
        <end position="25"/>
    </location>
    <ligand>
        <name>GTP</name>
        <dbReference type="ChEBI" id="CHEBI:37565"/>
    </ligand>
</feature>
<feature type="binding site" evidence="1">
    <location>
        <begin position="86"/>
        <end position="90"/>
    </location>
    <ligand>
        <name>GTP</name>
        <dbReference type="ChEBI" id="CHEBI:37565"/>
    </ligand>
</feature>
<feature type="binding site" evidence="1">
    <location>
        <begin position="140"/>
        <end position="143"/>
    </location>
    <ligand>
        <name>GTP</name>
        <dbReference type="ChEBI" id="CHEBI:37565"/>
    </ligand>
</feature>
<gene>
    <name evidence="1" type="primary">prfC</name>
    <name type="ordered locus">xcc-b100_1295</name>
</gene>
<evidence type="ECO:0000255" key="1">
    <source>
        <dbReference type="HAMAP-Rule" id="MF_00072"/>
    </source>
</evidence>
<keyword id="KW-0963">Cytoplasm</keyword>
<keyword id="KW-0342">GTP-binding</keyword>
<keyword id="KW-0547">Nucleotide-binding</keyword>
<keyword id="KW-0648">Protein biosynthesis</keyword>
<accession>B0RQB0</accession>
<protein>
    <recommendedName>
        <fullName evidence="1">Peptide chain release factor 3</fullName>
        <shortName evidence="1">RF-3</shortName>
    </recommendedName>
</protein>
<name>RF3_XANCB</name>
<comment type="function">
    <text evidence="1">Increases the formation of ribosomal termination complexes and stimulates activities of RF-1 and RF-2. It binds guanine nucleotides and has strong preference for UGA stop codons. It may interact directly with the ribosome. The stimulation of RF-1 and RF-2 is significantly reduced by GTP and GDP, but not by GMP.</text>
</comment>
<comment type="subcellular location">
    <subcellularLocation>
        <location evidence="1">Cytoplasm</location>
    </subcellularLocation>
</comment>
<comment type="similarity">
    <text evidence="1">Belongs to the TRAFAC class translation factor GTPase superfamily. Classic translation factor GTPase family. PrfC subfamily.</text>
</comment>
<organism>
    <name type="scientific">Xanthomonas campestris pv. campestris (strain B100)</name>
    <dbReference type="NCBI Taxonomy" id="509169"/>
    <lineage>
        <taxon>Bacteria</taxon>
        <taxon>Pseudomonadati</taxon>
        <taxon>Pseudomonadota</taxon>
        <taxon>Gammaproteobacteria</taxon>
        <taxon>Lysobacterales</taxon>
        <taxon>Lysobacteraceae</taxon>
        <taxon>Xanthomonas</taxon>
    </lineage>
</organism>
<sequence>MSEVSNEAARRRTFAIISHPDAGKTTLTEKLLLFGGAIQMAGSVKGRKAARHATSDWMALEKERGISVTSSVMQFPYEDKIVNLLDTPGHADFGEDTYRVLTAVDSALMVIDVAKGVEERTIKLMEVCRLRDTPIMTFINKLDREGKNPIDLLDEVETVLGIQCAPVTWPIGMGQRLKGVVHLITGEVHLYEQGRNFTRQDSTIFPSLDAPGLAEKIGTQMLDELREELELVQGASNPFDLDAYRAGQQTPVFFGSGVNNFGVQPLLDFFVEHAPPPQARDTTGRRVEAVEPKLSGFVFKIQANMDPQHRDRVAFMRVCSGKFTAGMKALHVRSGKDVKLANALTFMASDREIAAEAWPGDVIGIHNHGTISIGDTFTEGESLSFTGIPNFAPELFRRARLRDPLKLKQLQKGLAQLSEEGATQFFRPLMSNDLILGAVGVLQFDVVAYRLKDEYGVDAIFEPVSVTTARWVHCDNPKKLEEFREKNAGNLGIDAAGQLVYLAPTRVNLQLAQERAPDVRFSATREHAYATAVD</sequence>